<comment type="function">
    <text evidence="1">May be required for the dynein-mediated transport of pericentriolar proteins to the centrosome. Required for microtubule anchoring at the centrosome but not for microtubule nucleation. The BBSome complex is required for ciliogenesis but is dispensable for centriolar satellite function. This ciliogenic function is mediated in part by the Rab8 GDP/GTP exchange factor, which localizes to the basal body and contacts the BBSome. Rab8(GTP) enters the primary cilium and promotes extension of the ciliary membrane. Firstly the BBSome associates with the ciliary membrane and binds to RAB3IP/Rabin8, the guanosyl exchange factor (GEF) for Rab8 and then the Rab8-GTP localizes to the cilium and promotes docking and fusion of carrier vesicles to the base of the ciliary membrane (By similarity).</text>
</comment>
<comment type="subunit">
    <text evidence="3">Part of BBSome complex, that contains BBS1, BBS2, BBS4, BBS5, BBS7, BBS8, BBS9 and BBIP10 (By similarity). Interacts with PCM1 and DCTN1 (By similarity). Interacts with CCDC28B (By similarity). Interacts with ALDOB and C2CD3 (By similarity). Interacts with PKD1 (By similarity). Interacts with CEP290 (By similarity). Interacts with DLEC1 (By similarity).</text>
</comment>
<comment type="subcellular location">
    <subcellularLocation>
        <location evidence="1">Cytoplasm</location>
        <location evidence="1">Cytoskeleton</location>
        <location evidence="1">Microtubule organizing center</location>
        <location evidence="1">Centrosome</location>
    </subcellularLocation>
    <subcellularLocation>
        <location evidence="1">Cell projection</location>
        <location evidence="1">Cilium membrane</location>
    </subcellularLocation>
    <subcellularLocation>
        <location evidence="1">Cytoplasm</location>
    </subcellularLocation>
    <subcellularLocation>
        <location evidence="1">Cytoplasm</location>
        <location evidence="1">Cytoskeleton</location>
        <location evidence="1">Microtubule organizing center</location>
        <location evidence="1">Centrosome</location>
        <location evidence="1">Centriolar satellite</location>
    </subcellularLocation>
    <subcellularLocation>
        <location evidence="2">Cell projection</location>
        <location evidence="2">Cilium</location>
        <location evidence="2">Flagellum</location>
    </subcellularLocation>
    <subcellularLocation>
        <location evidence="2">Cell projection</location>
        <location evidence="2">Cilium</location>
    </subcellularLocation>
    <text evidence="2">Localizes to the pericentriolar material. Centrosomal localization requires dynein (By similarity). Localizes to the connecting cilium of photoreceptor cells (By similarity).</text>
</comment>
<comment type="similarity">
    <text evidence="5">Belongs to the BBS4 family.</text>
</comment>
<gene>
    <name type="primary">BBS4</name>
</gene>
<sequence length="519" mass="58221">MAEEKLSARTQLPVSAESQKPVLKKAPEFPILEKQNWLIHLYYIQKDYEACKAVIKEQLQETHGLCEYAIYVQALIFRLEGNIQESLRLFQMCAFLSPQCADNLKQVARSLFLLGKHKAAIEVYNEAAKLNQKDWEICHNLGVCYIYLKQFDKAQDQLHNALHLNRHDLTYIMLGKIFLLKGDLDKAIEIYKKAVEFSPENTELLTTLGLLYLQLGIYQKAFEHLGNTLTYDPTNYKAILAAGSMMQTHGDFDVALTKYKVVACAVIESPPLWNNIGMCFFGKKKYVAAISCLKRANYLAPLDWKILYNLGLVHLTMQQYASAFHFLSAAINFQPKMGELYMLLAVALTNLEDSENAKRAYEEAVRLDKCNPLVNLNYAVLLYNQGEKRDALAQYQEMEKKVNLLKYSSSLEFDPEMVEVAQKLGAALQVGEALVWTKPVKDPKSKHQTASTSKAAGFQQPLGSNQALGQAMSSAATCRKLSSGAGGTSQLTKPPSLPLEPEPTVEAQPTEASAQTREK</sequence>
<evidence type="ECO:0000250" key="1"/>
<evidence type="ECO:0000250" key="2">
    <source>
        <dbReference type="UniProtKB" id="Q8C1Z7"/>
    </source>
</evidence>
<evidence type="ECO:0000250" key="3">
    <source>
        <dbReference type="UniProtKB" id="Q96RK4"/>
    </source>
</evidence>
<evidence type="ECO:0000256" key="4">
    <source>
        <dbReference type="SAM" id="MobiDB-lite"/>
    </source>
</evidence>
<evidence type="ECO:0000305" key="5"/>
<evidence type="ECO:0007829" key="6">
    <source>
        <dbReference type="PDB" id="6VBU"/>
    </source>
</evidence>
<evidence type="ECO:0007829" key="7">
    <source>
        <dbReference type="PDB" id="6VBV"/>
    </source>
</evidence>
<organism>
    <name type="scientific">Bos taurus</name>
    <name type="common">Bovine</name>
    <dbReference type="NCBI Taxonomy" id="9913"/>
    <lineage>
        <taxon>Eukaryota</taxon>
        <taxon>Metazoa</taxon>
        <taxon>Chordata</taxon>
        <taxon>Craniata</taxon>
        <taxon>Vertebrata</taxon>
        <taxon>Euteleostomi</taxon>
        <taxon>Mammalia</taxon>
        <taxon>Eutheria</taxon>
        <taxon>Laurasiatheria</taxon>
        <taxon>Artiodactyla</taxon>
        <taxon>Ruminantia</taxon>
        <taxon>Pecora</taxon>
        <taxon>Bovidae</taxon>
        <taxon>Bovinae</taxon>
        <taxon>Bos</taxon>
    </lineage>
</organism>
<protein>
    <recommendedName>
        <fullName evidence="5">BBSome complex member BBS4</fullName>
    </recommendedName>
    <alternativeName>
        <fullName>Bardet-Biedl syndrome 4 protein homolog</fullName>
    </alternativeName>
</protein>
<dbReference type="EMBL" id="BC116137">
    <property type="protein sequence ID" value="AAI16138.1"/>
    <property type="molecule type" value="mRNA"/>
</dbReference>
<dbReference type="RefSeq" id="NP_001069424.1">
    <property type="nucleotide sequence ID" value="NM_001075956.1"/>
</dbReference>
<dbReference type="PDB" id="6VBU">
    <property type="method" value="EM"/>
    <property type="resolution" value="3.10 A"/>
    <property type="chains" value="4=1-519"/>
</dbReference>
<dbReference type="PDB" id="6VBV">
    <property type="method" value="EM"/>
    <property type="resolution" value="3.50 A"/>
    <property type="chains" value="4=1-519"/>
</dbReference>
<dbReference type="PDB" id="6VNW">
    <property type="method" value="EM"/>
    <property type="resolution" value="3.44 A"/>
    <property type="chains" value="E=1-519"/>
</dbReference>
<dbReference type="PDB" id="6VOA">
    <property type="method" value="EM"/>
    <property type="resolution" value="4.00 A"/>
    <property type="chains" value="E=1-519"/>
</dbReference>
<dbReference type="PDBsum" id="6VBU"/>
<dbReference type="PDBsum" id="6VBV"/>
<dbReference type="PDBsum" id="6VNW"/>
<dbReference type="PDBsum" id="6VOA"/>
<dbReference type="EMDB" id="EMD-21144"/>
<dbReference type="EMDB" id="EMD-21145"/>
<dbReference type="EMDB" id="EMD-21251"/>
<dbReference type="EMDB" id="EMD-21259"/>
<dbReference type="EMDB" id="EMD-7839"/>
<dbReference type="EMDB" id="EMD-7841"/>
<dbReference type="SMR" id="Q1JQ97"/>
<dbReference type="DIP" id="DIP-61536N"/>
<dbReference type="FunCoup" id="Q1JQ97">
    <property type="interactions" value="3791"/>
</dbReference>
<dbReference type="IntAct" id="Q1JQ97">
    <property type="interactions" value="2"/>
</dbReference>
<dbReference type="STRING" id="9913.ENSBTAP00000010013"/>
<dbReference type="PaxDb" id="9913-ENSBTAP00000010013"/>
<dbReference type="GeneID" id="532120"/>
<dbReference type="KEGG" id="bta:532120"/>
<dbReference type="CTD" id="585"/>
<dbReference type="VEuPathDB" id="HostDB:ENSBTAG00000007614"/>
<dbReference type="eggNOG" id="KOG1124">
    <property type="taxonomic scope" value="Eukaryota"/>
</dbReference>
<dbReference type="HOGENOM" id="CLU_033477_1_0_1"/>
<dbReference type="InParanoid" id="Q1JQ97"/>
<dbReference type="OMA" id="YCEVAWH"/>
<dbReference type="OrthoDB" id="309339at2759"/>
<dbReference type="TreeFam" id="TF324966"/>
<dbReference type="Reactome" id="R-BTA-5620922">
    <property type="pathway name" value="BBSome-mediated cargo-targeting to cilium"/>
</dbReference>
<dbReference type="Proteomes" id="UP000009136">
    <property type="component" value="Chromosome 10"/>
</dbReference>
<dbReference type="Bgee" id="ENSBTAG00000007614">
    <property type="expression patterns" value="Expressed in oviduct epithelium and 107 other cell types or tissues"/>
</dbReference>
<dbReference type="GO" id="GO:0034451">
    <property type="term" value="C:centriolar satellite"/>
    <property type="evidence" value="ECO:0000250"/>
    <property type="project" value="UniProtKB"/>
</dbReference>
<dbReference type="GO" id="GO:0005813">
    <property type="term" value="C:centrosome"/>
    <property type="evidence" value="ECO:0000250"/>
    <property type="project" value="UniProtKB"/>
</dbReference>
<dbReference type="GO" id="GO:0036064">
    <property type="term" value="C:ciliary basal body"/>
    <property type="evidence" value="ECO:0000318"/>
    <property type="project" value="GO_Central"/>
</dbReference>
<dbReference type="GO" id="GO:0060170">
    <property type="term" value="C:ciliary membrane"/>
    <property type="evidence" value="ECO:0007669"/>
    <property type="project" value="UniProtKB-SubCell"/>
</dbReference>
<dbReference type="GO" id="GO:0005929">
    <property type="term" value="C:cilium"/>
    <property type="evidence" value="ECO:0000250"/>
    <property type="project" value="UniProtKB"/>
</dbReference>
<dbReference type="GO" id="GO:0005737">
    <property type="term" value="C:cytoplasm"/>
    <property type="evidence" value="ECO:0007669"/>
    <property type="project" value="UniProtKB-SubCell"/>
</dbReference>
<dbReference type="GO" id="GO:0031514">
    <property type="term" value="C:motile cilium"/>
    <property type="evidence" value="ECO:0007669"/>
    <property type="project" value="UniProtKB-SubCell"/>
</dbReference>
<dbReference type="GO" id="GO:0000242">
    <property type="term" value="C:pericentriolar material"/>
    <property type="evidence" value="ECO:0000250"/>
    <property type="project" value="UniProtKB"/>
</dbReference>
<dbReference type="GO" id="GO:0030674">
    <property type="term" value="F:protein-macromolecule adaptor activity"/>
    <property type="evidence" value="ECO:0000250"/>
    <property type="project" value="UniProtKB"/>
</dbReference>
<dbReference type="GO" id="GO:0007098">
    <property type="term" value="P:centrosome cycle"/>
    <property type="evidence" value="ECO:0000250"/>
    <property type="project" value="UniProtKB"/>
</dbReference>
<dbReference type="GO" id="GO:0060271">
    <property type="term" value="P:cilium assembly"/>
    <property type="evidence" value="ECO:0000318"/>
    <property type="project" value="GO_Central"/>
</dbReference>
<dbReference type="GO" id="GO:0061512">
    <property type="term" value="P:protein localization to cilium"/>
    <property type="evidence" value="ECO:0000318"/>
    <property type="project" value="GO_Central"/>
</dbReference>
<dbReference type="GO" id="GO:0015031">
    <property type="term" value="P:protein transport"/>
    <property type="evidence" value="ECO:0007669"/>
    <property type="project" value="UniProtKB-KW"/>
</dbReference>
<dbReference type="FunFam" id="1.25.40.10:FF:000234">
    <property type="entry name" value="Bardet-Biedl syndrome 4 (Human)"/>
    <property type="match status" value="1"/>
</dbReference>
<dbReference type="FunFam" id="1.25.40.10:FF:000237">
    <property type="entry name" value="Bardet-Biedl syndrome 4 (Human)"/>
    <property type="match status" value="1"/>
</dbReference>
<dbReference type="FunFam" id="1.25.40.10:FF:000265">
    <property type="entry name" value="Bardet-Biedl syndrome 4 (Human)"/>
    <property type="match status" value="1"/>
</dbReference>
<dbReference type="Gene3D" id="1.25.40.10">
    <property type="entry name" value="Tetratricopeptide repeat domain"/>
    <property type="match status" value="3"/>
</dbReference>
<dbReference type="InterPro" id="IPR011990">
    <property type="entry name" value="TPR-like_helical_dom_sf"/>
</dbReference>
<dbReference type="InterPro" id="IPR019734">
    <property type="entry name" value="TPR_rpt"/>
</dbReference>
<dbReference type="PANTHER" id="PTHR44186">
    <property type="match status" value="1"/>
</dbReference>
<dbReference type="PANTHER" id="PTHR44186:SF1">
    <property type="entry name" value="BARDET-BIEDL SYNDROME 4 PROTEIN"/>
    <property type="match status" value="1"/>
</dbReference>
<dbReference type="Pfam" id="PF13414">
    <property type="entry name" value="TPR_11"/>
    <property type="match status" value="1"/>
</dbReference>
<dbReference type="Pfam" id="PF14559">
    <property type="entry name" value="TPR_19"/>
    <property type="match status" value="1"/>
</dbReference>
<dbReference type="Pfam" id="PF13181">
    <property type="entry name" value="TPR_8"/>
    <property type="match status" value="3"/>
</dbReference>
<dbReference type="SMART" id="SM00028">
    <property type="entry name" value="TPR"/>
    <property type="match status" value="8"/>
</dbReference>
<dbReference type="SUPFAM" id="SSF48452">
    <property type="entry name" value="TPR-like"/>
    <property type="match status" value="1"/>
</dbReference>
<dbReference type="PROSITE" id="PS50005">
    <property type="entry name" value="TPR"/>
    <property type="match status" value="7"/>
</dbReference>
<dbReference type="PROSITE" id="PS50293">
    <property type="entry name" value="TPR_REGION"/>
    <property type="match status" value="1"/>
</dbReference>
<reference key="1">
    <citation type="submission" date="2006-05" db="EMBL/GenBank/DDBJ databases">
        <authorList>
            <consortium name="NIH - Mammalian Gene Collection (MGC) project"/>
        </authorList>
    </citation>
    <scope>NUCLEOTIDE SEQUENCE [LARGE SCALE MRNA]</scope>
    <source>
        <strain>Hereford</strain>
        <tissue>Hippocampus</tissue>
    </source>
</reference>
<name>BBS4_BOVIN</name>
<proteinExistence type="evidence at protein level"/>
<accession>Q1JQ97</accession>
<keyword id="KW-0002">3D-structure</keyword>
<keyword id="KW-1003">Cell membrane</keyword>
<keyword id="KW-0966">Cell projection</keyword>
<keyword id="KW-0969">Cilium</keyword>
<keyword id="KW-0970">Cilium biogenesis/degradation</keyword>
<keyword id="KW-0963">Cytoplasm</keyword>
<keyword id="KW-0206">Cytoskeleton</keyword>
<keyword id="KW-0282">Flagellum</keyword>
<keyword id="KW-0472">Membrane</keyword>
<keyword id="KW-0653">Protein transport</keyword>
<keyword id="KW-1185">Reference proteome</keyword>
<keyword id="KW-0677">Repeat</keyword>
<keyword id="KW-0802">TPR repeat</keyword>
<keyword id="KW-0813">Transport</keyword>
<feature type="chain" id="PRO_0000284042" description="BBSome complex member BBS4">
    <location>
        <begin position="1"/>
        <end position="519"/>
    </location>
</feature>
<feature type="repeat" description="TPR 1">
    <location>
        <begin position="67"/>
        <end position="100"/>
    </location>
</feature>
<feature type="repeat" description="TPR 2">
    <location>
        <begin position="101"/>
        <end position="134"/>
    </location>
</feature>
<feature type="repeat" description="TPR 3">
    <location>
        <begin position="135"/>
        <end position="168"/>
    </location>
</feature>
<feature type="repeat" description="TPR 4">
    <location>
        <begin position="169"/>
        <end position="201"/>
    </location>
</feature>
<feature type="repeat" description="TPR 5">
    <location>
        <begin position="203"/>
        <end position="235"/>
    </location>
</feature>
<feature type="repeat" description="TPR 6">
    <location>
        <begin position="237"/>
        <end position="269"/>
    </location>
</feature>
<feature type="repeat" description="TPR 7">
    <location>
        <begin position="270"/>
        <end position="303"/>
    </location>
</feature>
<feature type="repeat" description="TPR 8">
    <location>
        <begin position="304"/>
        <end position="337"/>
    </location>
</feature>
<feature type="repeat" description="TPR 9">
    <location>
        <begin position="339"/>
        <end position="371"/>
    </location>
</feature>
<feature type="repeat" description="TPR 10">
    <location>
        <begin position="379"/>
        <end position="417"/>
    </location>
</feature>
<feature type="region of interest" description="Required for localization to centrosomes" evidence="1">
    <location>
        <begin position="1"/>
        <end position="66"/>
    </location>
</feature>
<feature type="region of interest" description="Interaction with PCM1" evidence="1">
    <location>
        <begin position="101"/>
        <end position="337"/>
    </location>
</feature>
<feature type="region of interest" description="Required for localization to centrosomes" evidence="1">
    <location>
        <begin position="338"/>
        <end position="519"/>
    </location>
</feature>
<feature type="region of interest" description="Disordered" evidence="4">
    <location>
        <begin position="439"/>
        <end position="519"/>
    </location>
</feature>
<feature type="compositionally biased region" description="Polar residues" evidence="4">
    <location>
        <begin position="461"/>
        <end position="476"/>
    </location>
</feature>
<feature type="compositionally biased region" description="Polar residues" evidence="4">
    <location>
        <begin position="510"/>
        <end position="519"/>
    </location>
</feature>
<feature type="strand" evidence="7">
    <location>
        <begin position="32"/>
        <end position="35"/>
    </location>
</feature>
<feature type="helix" evidence="6">
    <location>
        <begin position="37"/>
        <end position="44"/>
    </location>
</feature>
<feature type="helix" evidence="6">
    <location>
        <begin position="50"/>
        <end position="62"/>
    </location>
</feature>
<feature type="helix" evidence="6">
    <location>
        <begin position="69"/>
        <end position="79"/>
    </location>
</feature>
<feature type="helix" evidence="6">
    <location>
        <begin position="83"/>
        <end position="96"/>
    </location>
</feature>
<feature type="strand" evidence="6">
    <location>
        <begin position="97"/>
        <end position="99"/>
    </location>
</feature>
<feature type="helix" evidence="6">
    <location>
        <begin position="101"/>
        <end position="112"/>
    </location>
</feature>
<feature type="helix" evidence="6">
    <location>
        <begin position="118"/>
        <end position="130"/>
    </location>
</feature>
<feature type="helix" evidence="6">
    <location>
        <begin position="135"/>
        <end position="147"/>
    </location>
</feature>
<feature type="helix" evidence="6">
    <location>
        <begin position="151"/>
        <end position="164"/>
    </location>
</feature>
<feature type="helix" evidence="6">
    <location>
        <begin position="168"/>
        <end position="181"/>
    </location>
</feature>
<feature type="helix" evidence="6">
    <location>
        <begin position="184"/>
        <end position="196"/>
    </location>
</feature>
<feature type="helix" evidence="6">
    <location>
        <begin position="202"/>
        <end position="214"/>
    </location>
</feature>
<feature type="helix" evidence="6">
    <location>
        <begin position="219"/>
        <end position="231"/>
    </location>
</feature>
<feature type="helix" evidence="6">
    <location>
        <begin position="236"/>
        <end position="248"/>
    </location>
</feature>
<feature type="helix" evidence="6">
    <location>
        <begin position="252"/>
        <end position="262"/>
    </location>
</feature>
<feature type="turn" evidence="6">
    <location>
        <begin position="263"/>
        <end position="265"/>
    </location>
</feature>
<feature type="strand" evidence="6">
    <location>
        <begin position="266"/>
        <end position="268"/>
    </location>
</feature>
<feature type="helix" evidence="6">
    <location>
        <begin position="270"/>
        <end position="282"/>
    </location>
</feature>
<feature type="helix" evidence="6">
    <location>
        <begin position="286"/>
        <end position="298"/>
    </location>
</feature>
<feature type="helix" evidence="6">
    <location>
        <begin position="304"/>
        <end position="316"/>
    </location>
</feature>
<feature type="helix" evidence="6">
    <location>
        <begin position="323"/>
        <end position="333"/>
    </location>
</feature>
<feature type="helix" evidence="6">
    <location>
        <begin position="338"/>
        <end position="349"/>
    </location>
</feature>
<feature type="turn" evidence="6">
    <location>
        <begin position="350"/>
        <end position="352"/>
    </location>
</feature>
<feature type="helix" evidence="6">
    <location>
        <begin position="355"/>
        <end position="367"/>
    </location>
</feature>
<feature type="helix" evidence="6">
    <location>
        <begin position="373"/>
        <end position="384"/>
    </location>
</feature>
<feature type="helix" evidence="6">
    <location>
        <begin position="391"/>
        <end position="399"/>
    </location>
</feature>
<feature type="helix" evidence="6">
    <location>
        <begin position="413"/>
        <end position="422"/>
    </location>
</feature>